<dbReference type="EC" id="3.5.1.16" evidence="1"/>
<dbReference type="EMBL" id="CP001127">
    <property type="protein sequence ID" value="ACF90065.1"/>
    <property type="molecule type" value="Genomic_DNA"/>
</dbReference>
<dbReference type="RefSeq" id="WP_000800208.1">
    <property type="nucleotide sequence ID" value="NC_011094.1"/>
</dbReference>
<dbReference type="SMR" id="B4TQH3"/>
<dbReference type="MEROPS" id="M20.974"/>
<dbReference type="KEGG" id="sew:SeSA_A4330"/>
<dbReference type="HOGENOM" id="CLU_021802_2_4_6"/>
<dbReference type="UniPathway" id="UPA00068">
    <property type="reaction ID" value="UER00110"/>
</dbReference>
<dbReference type="Proteomes" id="UP000001865">
    <property type="component" value="Chromosome"/>
</dbReference>
<dbReference type="GO" id="GO:0005737">
    <property type="term" value="C:cytoplasm"/>
    <property type="evidence" value="ECO:0007669"/>
    <property type="project" value="UniProtKB-SubCell"/>
</dbReference>
<dbReference type="GO" id="GO:0008777">
    <property type="term" value="F:acetylornithine deacetylase activity"/>
    <property type="evidence" value="ECO:0007669"/>
    <property type="project" value="UniProtKB-UniRule"/>
</dbReference>
<dbReference type="GO" id="GO:0008270">
    <property type="term" value="F:zinc ion binding"/>
    <property type="evidence" value="ECO:0007669"/>
    <property type="project" value="UniProtKB-UniRule"/>
</dbReference>
<dbReference type="GO" id="GO:0006526">
    <property type="term" value="P:L-arginine biosynthetic process"/>
    <property type="evidence" value="ECO:0007669"/>
    <property type="project" value="UniProtKB-UniRule"/>
</dbReference>
<dbReference type="CDD" id="cd03894">
    <property type="entry name" value="M20_ArgE"/>
    <property type="match status" value="1"/>
</dbReference>
<dbReference type="FunFam" id="3.30.70.360:FF:000003">
    <property type="entry name" value="Acetylornithine deacetylase"/>
    <property type="match status" value="1"/>
</dbReference>
<dbReference type="Gene3D" id="3.30.70.360">
    <property type="match status" value="1"/>
</dbReference>
<dbReference type="Gene3D" id="3.40.630.10">
    <property type="entry name" value="Zn peptidases"/>
    <property type="match status" value="1"/>
</dbReference>
<dbReference type="HAMAP" id="MF_01108">
    <property type="entry name" value="ArgE"/>
    <property type="match status" value="1"/>
</dbReference>
<dbReference type="InterPro" id="IPR010169">
    <property type="entry name" value="AcOrn-deacetyl"/>
</dbReference>
<dbReference type="InterPro" id="IPR001261">
    <property type="entry name" value="ArgE/DapE_CS"/>
</dbReference>
<dbReference type="InterPro" id="IPR036264">
    <property type="entry name" value="Bact_exopeptidase_dim_dom"/>
</dbReference>
<dbReference type="InterPro" id="IPR002933">
    <property type="entry name" value="Peptidase_M20"/>
</dbReference>
<dbReference type="InterPro" id="IPR011650">
    <property type="entry name" value="Peptidase_M20_dimer"/>
</dbReference>
<dbReference type="InterPro" id="IPR050072">
    <property type="entry name" value="Peptidase_M20A"/>
</dbReference>
<dbReference type="NCBIfam" id="TIGR01892">
    <property type="entry name" value="AcOrn-deacetyl"/>
    <property type="match status" value="1"/>
</dbReference>
<dbReference type="NCBIfam" id="NF003474">
    <property type="entry name" value="PRK05111.1"/>
    <property type="match status" value="1"/>
</dbReference>
<dbReference type="PANTHER" id="PTHR43808">
    <property type="entry name" value="ACETYLORNITHINE DEACETYLASE"/>
    <property type="match status" value="1"/>
</dbReference>
<dbReference type="PANTHER" id="PTHR43808:SF1">
    <property type="entry name" value="ACETYLORNITHINE DEACETYLASE"/>
    <property type="match status" value="1"/>
</dbReference>
<dbReference type="Pfam" id="PF07687">
    <property type="entry name" value="M20_dimer"/>
    <property type="match status" value="1"/>
</dbReference>
<dbReference type="Pfam" id="PF01546">
    <property type="entry name" value="Peptidase_M20"/>
    <property type="match status" value="1"/>
</dbReference>
<dbReference type="SUPFAM" id="SSF55031">
    <property type="entry name" value="Bacterial exopeptidase dimerisation domain"/>
    <property type="match status" value="1"/>
</dbReference>
<dbReference type="SUPFAM" id="SSF53187">
    <property type="entry name" value="Zn-dependent exopeptidases"/>
    <property type="match status" value="1"/>
</dbReference>
<dbReference type="PROSITE" id="PS00758">
    <property type="entry name" value="ARGE_DAPE_CPG2_1"/>
    <property type="match status" value="1"/>
</dbReference>
<dbReference type="PROSITE" id="PS00759">
    <property type="entry name" value="ARGE_DAPE_CPG2_2"/>
    <property type="match status" value="1"/>
</dbReference>
<feature type="chain" id="PRO_1000137080" description="Acetylornithine deacetylase">
    <location>
        <begin position="1"/>
        <end position="383"/>
    </location>
</feature>
<feature type="active site" evidence="1">
    <location>
        <position position="82"/>
    </location>
</feature>
<feature type="active site" evidence="1">
    <location>
        <position position="144"/>
    </location>
</feature>
<feature type="binding site" evidence="1">
    <location>
        <position position="80"/>
    </location>
    <ligand>
        <name>Zn(2+)</name>
        <dbReference type="ChEBI" id="CHEBI:29105"/>
        <label>1</label>
    </ligand>
</feature>
<feature type="binding site" evidence="1">
    <location>
        <position position="112"/>
    </location>
    <ligand>
        <name>Zn(2+)</name>
        <dbReference type="ChEBI" id="CHEBI:29105"/>
        <label>1</label>
    </ligand>
</feature>
<feature type="binding site" evidence="1">
    <location>
        <position position="112"/>
    </location>
    <ligand>
        <name>Zn(2+)</name>
        <dbReference type="ChEBI" id="CHEBI:29105"/>
        <label>2</label>
    </ligand>
</feature>
<feature type="binding site" evidence="1">
    <location>
        <position position="145"/>
    </location>
    <ligand>
        <name>Zn(2+)</name>
        <dbReference type="ChEBI" id="CHEBI:29105"/>
        <label>2</label>
    </ligand>
</feature>
<feature type="binding site" evidence="1">
    <location>
        <position position="169"/>
    </location>
    <ligand>
        <name>Zn(2+)</name>
        <dbReference type="ChEBI" id="CHEBI:29105"/>
        <label>1</label>
    </ligand>
</feature>
<feature type="binding site" evidence="1">
    <location>
        <position position="355"/>
    </location>
    <ligand>
        <name>Zn(2+)</name>
        <dbReference type="ChEBI" id="CHEBI:29105"/>
        <label>2</label>
    </ligand>
</feature>
<reference key="1">
    <citation type="journal article" date="2011" name="J. Bacteriol.">
        <title>Comparative genomics of 28 Salmonella enterica isolates: evidence for CRISPR-mediated adaptive sublineage evolution.</title>
        <authorList>
            <person name="Fricke W.F."/>
            <person name="Mammel M.K."/>
            <person name="McDermott P.F."/>
            <person name="Tartera C."/>
            <person name="White D.G."/>
            <person name="Leclerc J.E."/>
            <person name="Ravel J."/>
            <person name="Cebula T.A."/>
        </authorList>
    </citation>
    <scope>NUCLEOTIDE SEQUENCE [LARGE SCALE GENOMIC DNA]</scope>
    <source>
        <strain>CVM19633</strain>
    </source>
</reference>
<evidence type="ECO:0000255" key="1">
    <source>
        <dbReference type="HAMAP-Rule" id="MF_01108"/>
    </source>
</evidence>
<accession>B4TQH3</accession>
<name>ARGE_SALSV</name>
<keyword id="KW-0028">Amino-acid biosynthesis</keyword>
<keyword id="KW-0055">Arginine biosynthesis</keyword>
<keyword id="KW-0170">Cobalt</keyword>
<keyword id="KW-0963">Cytoplasm</keyword>
<keyword id="KW-0378">Hydrolase</keyword>
<keyword id="KW-0479">Metal-binding</keyword>
<keyword id="KW-0862">Zinc</keyword>
<protein>
    <recommendedName>
        <fullName evidence="1">Acetylornithine deacetylase</fullName>
        <shortName evidence="1">AO</shortName>
        <shortName evidence="1">Acetylornithinase</shortName>
        <ecNumber evidence="1">3.5.1.16</ecNumber>
    </recommendedName>
    <alternativeName>
        <fullName evidence="1">N-acetylornithinase</fullName>
        <shortName evidence="1">NAO</shortName>
    </alternativeName>
</protein>
<organism>
    <name type="scientific">Salmonella schwarzengrund (strain CVM19633)</name>
    <dbReference type="NCBI Taxonomy" id="439843"/>
    <lineage>
        <taxon>Bacteria</taxon>
        <taxon>Pseudomonadati</taxon>
        <taxon>Pseudomonadota</taxon>
        <taxon>Gammaproteobacteria</taxon>
        <taxon>Enterobacterales</taxon>
        <taxon>Enterobacteriaceae</taxon>
        <taxon>Salmonella</taxon>
    </lineage>
</organism>
<proteinExistence type="inferred from homology"/>
<sequence>MKNVLPPFIEIYRALIATPSISATEESLDQSNASLITLLAGWFSDLGFNVEVQPVPGTRNKFNMLASTGHGAGGLLLTGHTDTVPFDDGRWTRDPFTLTEHDNKLYGLGTADMKGFFAFILDALRDVDVTKLKKPLYILATADEETSMAGARYFSETTALRPDCAIIGEPTSLQPIRAHKGHISNVVRVLGQSGHSSDPARGVNAIELMHDAIGHIMQLRDSLKARYHYEAFTVPYPTLNLGHIHGGDASNRICACCELHMDIRPLPGMTLNDLNGLLNDALAPVSERWPGRLTVAELHPPIPGYECPPDHQLVEVVEKLLGTKTDVVNYCTEAPFMQTLCPTLVLGPGSINQAHQPDEYLETRFIKPTRELITQVVHHFCWH</sequence>
<comment type="function">
    <text evidence="1">Catalyzes the hydrolysis of the amide bond of N(2)-acetylated L-amino acids. Cleaves the acetyl group from N-acetyl-L-ornithine to form L-ornithine, an intermediate in L-arginine biosynthesis pathway, and a branchpoint in the synthesis of polyamines.</text>
</comment>
<comment type="catalytic activity">
    <reaction evidence="1">
        <text>N(2)-acetyl-L-ornithine + H2O = L-ornithine + acetate</text>
        <dbReference type="Rhea" id="RHEA:15941"/>
        <dbReference type="ChEBI" id="CHEBI:15377"/>
        <dbReference type="ChEBI" id="CHEBI:30089"/>
        <dbReference type="ChEBI" id="CHEBI:46911"/>
        <dbReference type="ChEBI" id="CHEBI:57805"/>
        <dbReference type="EC" id="3.5.1.16"/>
    </reaction>
</comment>
<comment type="cofactor">
    <cofactor evidence="1">
        <name>Zn(2+)</name>
        <dbReference type="ChEBI" id="CHEBI:29105"/>
    </cofactor>
    <cofactor evidence="1">
        <name>Co(2+)</name>
        <dbReference type="ChEBI" id="CHEBI:48828"/>
    </cofactor>
    <text evidence="1">Binds 2 Zn(2+) or Co(2+) ions per subunit.</text>
</comment>
<comment type="cofactor">
    <cofactor evidence="1">
        <name>glutathione</name>
        <dbReference type="ChEBI" id="CHEBI:57925"/>
    </cofactor>
</comment>
<comment type="pathway">
    <text evidence="1">Amino-acid biosynthesis; L-arginine biosynthesis; L-ornithine from N(2)-acetyl-L-ornithine (linear): step 1/1.</text>
</comment>
<comment type="subunit">
    <text evidence="1">Homodimer.</text>
</comment>
<comment type="subcellular location">
    <subcellularLocation>
        <location evidence="1">Cytoplasm</location>
    </subcellularLocation>
</comment>
<comment type="similarity">
    <text evidence="1">Belongs to the peptidase M20A family. ArgE subfamily.</text>
</comment>
<gene>
    <name evidence="1" type="primary">argE</name>
    <name type="ordered locus">SeSA_A4330</name>
</gene>